<sequence length="615" mass="67865">MATVEVATELGTVVTAVGPKAKDEEEEEEEEESLPPCETVRWAPVGAVAEAGPGAATFSEAAAAEEPGAAPGSPSDATVRTLRRLEAERRQLDSALLALSSHFAQVQFRLRQVVRGAPAEQQRLLRELEDFAFRGCPHVLGYEGLADPCGGDESDVLPGDRPRVRGEDQSEQEKRERLETQREKQKELILQLKTQLDDLETFAYQEGSYDSLPQSVVLERQRVIIDELIKKLDMNLNEDISSLSTEELRQRVDAAVAQIVNPVRVKEQLVEQLKTQIRDLEMFISFIQDEVGSPLQTGGHCECQASGKVGIGSTRVGGSTLPPGPGKAKAEDAKRARETGLHLMRRALAVLQIFTVSQLGCATGQIPQTLWQRSQADRDYSHLLKRLEVSVDRVKQLALRHQPHDHVITSANLQDLSLGGKDELTTVVRKELTVAVRDLLAHGLYASSSGMSLVMAPLACLLPVFSSAPETMHPWELFVKYYHAKNGRAYVESPARKLSQSFALPIMGDTAVTPKQSLLTAIHLVLTEHDPFKRSADSELKALVCMALNEQRLVSWVNLICKSGSLIEPHYQPWSYMAHTGFESALNLLSRLSSLKFSLPVDLAVRQLKNIKDAF</sequence>
<protein>
    <recommendedName>
        <fullName>RUN domain-containing protein 1</fullName>
    </recommendedName>
</protein>
<reference key="1">
    <citation type="journal article" date="2005" name="Science">
        <title>The transcriptional landscape of the mammalian genome.</title>
        <authorList>
            <person name="Carninci P."/>
            <person name="Kasukawa T."/>
            <person name="Katayama S."/>
            <person name="Gough J."/>
            <person name="Frith M.C."/>
            <person name="Maeda N."/>
            <person name="Oyama R."/>
            <person name="Ravasi T."/>
            <person name="Lenhard B."/>
            <person name="Wells C."/>
            <person name="Kodzius R."/>
            <person name="Shimokawa K."/>
            <person name="Bajic V.B."/>
            <person name="Brenner S.E."/>
            <person name="Batalov S."/>
            <person name="Forrest A.R."/>
            <person name="Zavolan M."/>
            <person name="Davis M.J."/>
            <person name="Wilming L.G."/>
            <person name="Aidinis V."/>
            <person name="Allen J.E."/>
            <person name="Ambesi-Impiombato A."/>
            <person name="Apweiler R."/>
            <person name="Aturaliya R.N."/>
            <person name="Bailey T.L."/>
            <person name="Bansal M."/>
            <person name="Baxter L."/>
            <person name="Beisel K.W."/>
            <person name="Bersano T."/>
            <person name="Bono H."/>
            <person name="Chalk A.M."/>
            <person name="Chiu K.P."/>
            <person name="Choudhary V."/>
            <person name="Christoffels A."/>
            <person name="Clutterbuck D.R."/>
            <person name="Crowe M.L."/>
            <person name="Dalla E."/>
            <person name="Dalrymple B.P."/>
            <person name="de Bono B."/>
            <person name="Della Gatta G."/>
            <person name="di Bernardo D."/>
            <person name="Down T."/>
            <person name="Engstrom P."/>
            <person name="Fagiolini M."/>
            <person name="Faulkner G."/>
            <person name="Fletcher C.F."/>
            <person name="Fukushima T."/>
            <person name="Furuno M."/>
            <person name="Futaki S."/>
            <person name="Gariboldi M."/>
            <person name="Georgii-Hemming P."/>
            <person name="Gingeras T.R."/>
            <person name="Gojobori T."/>
            <person name="Green R.E."/>
            <person name="Gustincich S."/>
            <person name="Harbers M."/>
            <person name="Hayashi Y."/>
            <person name="Hensch T.K."/>
            <person name="Hirokawa N."/>
            <person name="Hill D."/>
            <person name="Huminiecki L."/>
            <person name="Iacono M."/>
            <person name="Ikeo K."/>
            <person name="Iwama A."/>
            <person name="Ishikawa T."/>
            <person name="Jakt M."/>
            <person name="Kanapin A."/>
            <person name="Katoh M."/>
            <person name="Kawasawa Y."/>
            <person name="Kelso J."/>
            <person name="Kitamura H."/>
            <person name="Kitano H."/>
            <person name="Kollias G."/>
            <person name="Krishnan S.P."/>
            <person name="Kruger A."/>
            <person name="Kummerfeld S.K."/>
            <person name="Kurochkin I.V."/>
            <person name="Lareau L.F."/>
            <person name="Lazarevic D."/>
            <person name="Lipovich L."/>
            <person name="Liu J."/>
            <person name="Liuni S."/>
            <person name="McWilliam S."/>
            <person name="Madan Babu M."/>
            <person name="Madera M."/>
            <person name="Marchionni L."/>
            <person name="Matsuda H."/>
            <person name="Matsuzawa S."/>
            <person name="Miki H."/>
            <person name="Mignone F."/>
            <person name="Miyake S."/>
            <person name="Morris K."/>
            <person name="Mottagui-Tabar S."/>
            <person name="Mulder N."/>
            <person name="Nakano N."/>
            <person name="Nakauchi H."/>
            <person name="Ng P."/>
            <person name="Nilsson R."/>
            <person name="Nishiguchi S."/>
            <person name="Nishikawa S."/>
            <person name="Nori F."/>
            <person name="Ohara O."/>
            <person name="Okazaki Y."/>
            <person name="Orlando V."/>
            <person name="Pang K.C."/>
            <person name="Pavan W.J."/>
            <person name="Pavesi G."/>
            <person name="Pesole G."/>
            <person name="Petrovsky N."/>
            <person name="Piazza S."/>
            <person name="Reed J."/>
            <person name="Reid J.F."/>
            <person name="Ring B.Z."/>
            <person name="Ringwald M."/>
            <person name="Rost B."/>
            <person name="Ruan Y."/>
            <person name="Salzberg S.L."/>
            <person name="Sandelin A."/>
            <person name="Schneider C."/>
            <person name="Schoenbach C."/>
            <person name="Sekiguchi K."/>
            <person name="Semple C.A."/>
            <person name="Seno S."/>
            <person name="Sessa L."/>
            <person name="Sheng Y."/>
            <person name="Shibata Y."/>
            <person name="Shimada H."/>
            <person name="Shimada K."/>
            <person name="Silva D."/>
            <person name="Sinclair B."/>
            <person name="Sperling S."/>
            <person name="Stupka E."/>
            <person name="Sugiura K."/>
            <person name="Sultana R."/>
            <person name="Takenaka Y."/>
            <person name="Taki K."/>
            <person name="Tammoja K."/>
            <person name="Tan S.L."/>
            <person name="Tang S."/>
            <person name="Taylor M.S."/>
            <person name="Tegner J."/>
            <person name="Teichmann S.A."/>
            <person name="Ueda H.R."/>
            <person name="van Nimwegen E."/>
            <person name="Verardo R."/>
            <person name="Wei C.L."/>
            <person name="Yagi K."/>
            <person name="Yamanishi H."/>
            <person name="Zabarovsky E."/>
            <person name="Zhu S."/>
            <person name="Zimmer A."/>
            <person name="Hide W."/>
            <person name="Bult C."/>
            <person name="Grimmond S.M."/>
            <person name="Teasdale R.D."/>
            <person name="Liu E.T."/>
            <person name="Brusic V."/>
            <person name="Quackenbush J."/>
            <person name="Wahlestedt C."/>
            <person name="Mattick J.S."/>
            <person name="Hume D.A."/>
            <person name="Kai C."/>
            <person name="Sasaki D."/>
            <person name="Tomaru Y."/>
            <person name="Fukuda S."/>
            <person name="Kanamori-Katayama M."/>
            <person name="Suzuki M."/>
            <person name="Aoki J."/>
            <person name="Arakawa T."/>
            <person name="Iida J."/>
            <person name="Imamura K."/>
            <person name="Itoh M."/>
            <person name="Kato T."/>
            <person name="Kawaji H."/>
            <person name="Kawagashira N."/>
            <person name="Kawashima T."/>
            <person name="Kojima M."/>
            <person name="Kondo S."/>
            <person name="Konno H."/>
            <person name="Nakano K."/>
            <person name="Ninomiya N."/>
            <person name="Nishio T."/>
            <person name="Okada M."/>
            <person name="Plessy C."/>
            <person name="Shibata K."/>
            <person name="Shiraki T."/>
            <person name="Suzuki S."/>
            <person name="Tagami M."/>
            <person name="Waki K."/>
            <person name="Watahiki A."/>
            <person name="Okamura-Oho Y."/>
            <person name="Suzuki H."/>
            <person name="Kawai J."/>
            <person name="Hayashizaki Y."/>
        </authorList>
    </citation>
    <scope>NUCLEOTIDE SEQUENCE [LARGE SCALE MRNA]</scope>
    <source>
        <strain>C57BL/6J</strain>
        <strain>NOD</strain>
        <tissue>Head</tissue>
        <tissue>Spleen</tissue>
    </source>
</reference>
<reference key="2">
    <citation type="journal article" date="2009" name="PLoS Biol.">
        <title>Lineage-specific biology revealed by a finished genome assembly of the mouse.</title>
        <authorList>
            <person name="Church D.M."/>
            <person name="Goodstadt L."/>
            <person name="Hillier L.W."/>
            <person name="Zody M.C."/>
            <person name="Goldstein S."/>
            <person name="She X."/>
            <person name="Bult C.J."/>
            <person name="Agarwala R."/>
            <person name="Cherry J.L."/>
            <person name="DiCuccio M."/>
            <person name="Hlavina W."/>
            <person name="Kapustin Y."/>
            <person name="Meric P."/>
            <person name="Maglott D."/>
            <person name="Birtle Z."/>
            <person name="Marques A.C."/>
            <person name="Graves T."/>
            <person name="Zhou S."/>
            <person name="Teague B."/>
            <person name="Potamousis K."/>
            <person name="Churas C."/>
            <person name="Place M."/>
            <person name="Herschleb J."/>
            <person name="Runnheim R."/>
            <person name="Forrest D."/>
            <person name="Amos-Landgraf J."/>
            <person name="Schwartz D.C."/>
            <person name="Cheng Z."/>
            <person name="Lindblad-Toh K."/>
            <person name="Eichler E.E."/>
            <person name="Ponting C.P."/>
        </authorList>
    </citation>
    <scope>NUCLEOTIDE SEQUENCE [LARGE SCALE GENOMIC DNA]</scope>
    <source>
        <strain>C57BL/6J</strain>
    </source>
</reference>
<reference key="3">
    <citation type="journal article" date="2004" name="Genome Res.">
        <title>The status, quality, and expansion of the NIH full-length cDNA project: the Mammalian Gene Collection (MGC).</title>
        <authorList>
            <consortium name="The MGC Project Team"/>
        </authorList>
    </citation>
    <scope>NUCLEOTIDE SEQUENCE [LARGE SCALE MRNA]</scope>
</reference>
<reference key="4">
    <citation type="journal article" date="2010" name="Cell">
        <title>A tissue-specific atlas of mouse protein phosphorylation and expression.</title>
        <authorList>
            <person name="Huttlin E.L."/>
            <person name="Jedrychowski M.P."/>
            <person name="Elias J.E."/>
            <person name="Goswami T."/>
            <person name="Rad R."/>
            <person name="Beausoleil S.A."/>
            <person name="Villen J."/>
            <person name="Haas W."/>
            <person name="Sowa M.E."/>
            <person name="Gygi S.P."/>
        </authorList>
    </citation>
    <scope>PHOSPHORYLATION [LARGE SCALE ANALYSIS] AT SER-499</scope>
    <scope>IDENTIFICATION BY MASS SPECTROMETRY [LARGE SCALE ANALYSIS]</scope>
    <source>
        <tissue>Kidney</tissue>
        <tissue>Lung</tissue>
    </source>
</reference>
<organism>
    <name type="scientific">Mus musculus</name>
    <name type="common">Mouse</name>
    <dbReference type="NCBI Taxonomy" id="10090"/>
    <lineage>
        <taxon>Eukaryota</taxon>
        <taxon>Metazoa</taxon>
        <taxon>Chordata</taxon>
        <taxon>Craniata</taxon>
        <taxon>Vertebrata</taxon>
        <taxon>Euteleostomi</taxon>
        <taxon>Mammalia</taxon>
        <taxon>Eutheria</taxon>
        <taxon>Euarchontoglires</taxon>
        <taxon>Glires</taxon>
        <taxon>Rodentia</taxon>
        <taxon>Myomorpha</taxon>
        <taxon>Muroidea</taxon>
        <taxon>Muridae</taxon>
        <taxon>Murinae</taxon>
        <taxon>Mus</taxon>
        <taxon>Mus</taxon>
    </lineage>
</organism>
<comment type="function">
    <text evidence="1">May play a role as p53/TP53 inhibitor and thus may have oncogenic activity.</text>
</comment>
<feature type="chain" id="PRO_0000284512" description="RUN domain-containing protein 1">
    <location>
        <begin position="1"/>
        <end position="615"/>
    </location>
</feature>
<feature type="domain" description="RUN" evidence="4">
    <location>
        <begin position="423"/>
        <end position="604"/>
    </location>
</feature>
<feature type="region of interest" description="Disordered" evidence="5">
    <location>
        <begin position="15"/>
        <end position="41"/>
    </location>
</feature>
<feature type="region of interest" description="Disordered" evidence="5">
    <location>
        <begin position="147"/>
        <end position="180"/>
    </location>
</feature>
<feature type="coiled-coil region" evidence="3">
    <location>
        <begin position="76"/>
        <end position="102"/>
    </location>
</feature>
<feature type="coiled-coil region" evidence="3">
    <location>
        <begin position="163"/>
        <end position="238"/>
    </location>
</feature>
<feature type="compositionally biased region" description="Acidic residues" evidence="5">
    <location>
        <begin position="24"/>
        <end position="33"/>
    </location>
</feature>
<feature type="compositionally biased region" description="Basic and acidic residues" evidence="5">
    <location>
        <begin position="158"/>
        <end position="180"/>
    </location>
</feature>
<feature type="modified residue" description="Phosphoserine" evidence="2">
    <location>
        <position position="73"/>
    </location>
</feature>
<feature type="modified residue" description="Phosphoserine" evidence="7">
    <location>
        <position position="499"/>
    </location>
</feature>
<feature type="sequence conflict" description="In Ref. 1; BAE33983." evidence="6" ref="1">
    <original>G</original>
    <variation>R</variation>
    <location>
        <position position="144"/>
    </location>
</feature>
<feature type="sequence conflict" description="In Ref. 1; BAE33983 and 3; AAI19594." evidence="6" ref="1 3">
    <original>K</original>
    <variation>E</variation>
    <location>
        <position position="174"/>
    </location>
</feature>
<feature type="sequence conflict" description="In Ref. 1; BAC39654." evidence="6" ref="1">
    <original>D</original>
    <variation>G</variation>
    <location>
        <position position="332"/>
    </location>
</feature>
<feature type="sequence conflict" description="In Ref. 1; BAE33983." evidence="6" ref="1">
    <original>S</original>
    <variation>A</variation>
    <location>
        <position position="449"/>
    </location>
</feature>
<name>RUND1_MOUSE</name>
<evidence type="ECO:0000250" key="1"/>
<evidence type="ECO:0000250" key="2">
    <source>
        <dbReference type="UniProtKB" id="Q96C34"/>
    </source>
</evidence>
<evidence type="ECO:0000255" key="3"/>
<evidence type="ECO:0000255" key="4">
    <source>
        <dbReference type="PROSITE-ProRule" id="PRU00178"/>
    </source>
</evidence>
<evidence type="ECO:0000256" key="5">
    <source>
        <dbReference type="SAM" id="MobiDB-lite"/>
    </source>
</evidence>
<evidence type="ECO:0000305" key="6"/>
<evidence type="ECO:0007744" key="7">
    <source>
    </source>
</evidence>
<keyword id="KW-0175">Coiled coil</keyword>
<keyword id="KW-0597">Phosphoprotein</keyword>
<keyword id="KW-1185">Reference proteome</keyword>
<gene>
    <name type="primary">Rundc1</name>
</gene>
<proteinExistence type="evidence at protein level"/>
<dbReference type="EMBL" id="AK086362">
    <property type="protein sequence ID" value="BAC39654.1"/>
    <property type="molecule type" value="mRNA"/>
</dbReference>
<dbReference type="EMBL" id="AK157156">
    <property type="protein sequence ID" value="BAE33983.1"/>
    <property type="molecule type" value="mRNA"/>
</dbReference>
<dbReference type="EMBL" id="AL590996">
    <property type="status" value="NOT_ANNOTATED_CDS"/>
    <property type="molecule type" value="Genomic_DNA"/>
</dbReference>
<dbReference type="EMBL" id="BC119592">
    <property type="protein sequence ID" value="AAI19593.1"/>
    <property type="molecule type" value="mRNA"/>
</dbReference>
<dbReference type="EMBL" id="BC119593">
    <property type="protein sequence ID" value="AAI19594.1"/>
    <property type="molecule type" value="mRNA"/>
</dbReference>
<dbReference type="CCDS" id="CCDS25469.1"/>
<dbReference type="RefSeq" id="NP_766154.2">
    <property type="nucleotide sequence ID" value="NM_172566.4"/>
</dbReference>
<dbReference type="SMR" id="Q0VDN7"/>
<dbReference type="BioGRID" id="229860">
    <property type="interactions" value="1"/>
</dbReference>
<dbReference type="FunCoup" id="Q0VDN7">
    <property type="interactions" value="2529"/>
</dbReference>
<dbReference type="STRING" id="10090.ENSMUSP00000042151"/>
<dbReference type="iPTMnet" id="Q0VDN7"/>
<dbReference type="PhosphoSitePlus" id="Q0VDN7"/>
<dbReference type="SwissPalm" id="Q0VDN7"/>
<dbReference type="PaxDb" id="10090-ENSMUSP00000042151"/>
<dbReference type="ProteomicsDB" id="260958"/>
<dbReference type="Pumba" id="Q0VDN7"/>
<dbReference type="Antibodypedia" id="17190">
    <property type="antibodies" value="58 antibodies from 18 providers"/>
</dbReference>
<dbReference type="Ensembl" id="ENSMUST00000040561.6">
    <property type="protein sequence ID" value="ENSMUSP00000042151.6"/>
    <property type="gene ID" value="ENSMUSG00000035007.6"/>
</dbReference>
<dbReference type="GeneID" id="217201"/>
<dbReference type="KEGG" id="mmu:217201"/>
<dbReference type="UCSC" id="uc007lov.2">
    <property type="organism name" value="mouse"/>
</dbReference>
<dbReference type="AGR" id="MGI:2144506"/>
<dbReference type="CTD" id="146923"/>
<dbReference type="MGI" id="MGI:2144506">
    <property type="gene designation" value="Rundc1"/>
</dbReference>
<dbReference type="VEuPathDB" id="HostDB:ENSMUSG00000035007"/>
<dbReference type="eggNOG" id="KOG3759">
    <property type="taxonomic scope" value="Eukaryota"/>
</dbReference>
<dbReference type="GeneTree" id="ENSGT00390000007311"/>
<dbReference type="HOGENOM" id="CLU_020366_0_0_1"/>
<dbReference type="InParanoid" id="Q0VDN7"/>
<dbReference type="OMA" id="THKGNHW"/>
<dbReference type="OrthoDB" id="10068328at2759"/>
<dbReference type="PhylomeDB" id="Q0VDN7"/>
<dbReference type="TreeFam" id="TF105949"/>
<dbReference type="BioGRID-ORCS" id="217201">
    <property type="hits" value="3 hits in 75 CRISPR screens"/>
</dbReference>
<dbReference type="PRO" id="PR:Q0VDN7"/>
<dbReference type="Proteomes" id="UP000000589">
    <property type="component" value="Chromosome 11"/>
</dbReference>
<dbReference type="RNAct" id="Q0VDN7">
    <property type="molecule type" value="protein"/>
</dbReference>
<dbReference type="Bgee" id="ENSMUSG00000035007">
    <property type="expression patterns" value="Expressed in ear vesicle and 220 other cell types or tissues"/>
</dbReference>
<dbReference type="GO" id="GO:0001701">
    <property type="term" value="P:in utero embryonic development"/>
    <property type="evidence" value="ECO:0000315"/>
    <property type="project" value="MGI"/>
</dbReference>
<dbReference type="CDD" id="cd17683">
    <property type="entry name" value="RUN_RUNDC1"/>
    <property type="match status" value="1"/>
</dbReference>
<dbReference type="FunFam" id="1.20.58.900:FF:000012">
    <property type="entry name" value="RUN domain-containing protein 1"/>
    <property type="match status" value="1"/>
</dbReference>
<dbReference type="Gene3D" id="1.20.58.900">
    <property type="match status" value="1"/>
</dbReference>
<dbReference type="InterPro" id="IPR004012">
    <property type="entry name" value="Run_dom"/>
</dbReference>
<dbReference type="InterPro" id="IPR037213">
    <property type="entry name" value="Run_dom_sf"/>
</dbReference>
<dbReference type="PANTHER" id="PTHR47194:SF5">
    <property type="entry name" value="RUN DOMAIN-CONTAINING PROTEIN 1"/>
    <property type="match status" value="1"/>
</dbReference>
<dbReference type="PANTHER" id="PTHR47194">
    <property type="entry name" value="SORTING NEXIN-29-RELATED"/>
    <property type="match status" value="1"/>
</dbReference>
<dbReference type="Pfam" id="PF02759">
    <property type="entry name" value="RUN"/>
    <property type="match status" value="1"/>
</dbReference>
<dbReference type="SMART" id="SM00593">
    <property type="entry name" value="RUN"/>
    <property type="match status" value="1"/>
</dbReference>
<dbReference type="SUPFAM" id="SSF140741">
    <property type="entry name" value="RUN domain-like"/>
    <property type="match status" value="1"/>
</dbReference>
<dbReference type="PROSITE" id="PS50826">
    <property type="entry name" value="RUN"/>
    <property type="match status" value="1"/>
</dbReference>
<accession>Q0VDN7</accession>
<accession>Q0VDN6</accession>
<accession>Q3U072</accession>
<accession>Q8C3C0</accession>